<proteinExistence type="evidence at protein level"/>
<accession>Q95JC9</accession>
<accession>P84505</accession>
<accession>P84506</accession>
<accession>Q95JD0</accession>
<accession>Q95JD1</accession>
<protein>
    <recommendedName>
        <fullName>Basic proline-rich protein</fullName>
    </recommendedName>
    <component>
        <recommendedName>
            <fullName>Proline-rich peptide SP-B-like</fullName>
            <shortName>PRP-SP-B-like</shortName>
        </recommendedName>
    </component>
    <component>
        <recommendedName>
            <fullName>Proline-rich peptide SP-A</fullName>
            <shortName>PRP-SP-A</shortName>
        </recommendedName>
    </component>
    <component>
        <recommendedName>
            <fullName>Proline-rich peptide SP-B</fullName>
            <shortName>PRP-SP-B</shortName>
        </recommendedName>
    </component>
    <component>
        <recommendedName>
            <fullName>Parotid hormone</fullName>
        </recommendedName>
        <alternativeName>
            <fullName>PH-Ab</fullName>
        </alternativeName>
    </component>
</protein>
<comment type="function">
    <text evidence="4">The parotid hormone stimulates dentinal fluid transport in teeth.</text>
</comment>
<comment type="subcellular location">
    <subcellularLocation>
        <location evidence="3">Secreted</location>
    </subcellularLocation>
</comment>
<comment type="alternative products">
    <event type="alternative splicing"/>
    <isoform>
        <id>Q95JC9-1</id>
        <name evidence="2">1</name>
        <sequence type="displayed"/>
    </isoform>
    <isoform>
        <id>Q95JC9-2</id>
        <name evidence="2">2</name>
        <sequence type="described" ref="VSP_052037 VSP_052038 VSP_052040 VSP_052041"/>
    </isoform>
    <isoform>
        <id>Q95JC9-3</id>
        <name evidence="2">3</name>
        <sequence type="described" ref="VSP_052037 VSP_052038 VSP_052039"/>
    </isoform>
</comment>
<comment type="tissue specificity">
    <text evidence="2 3">Acinar cells and secretory granules of the parotid gland.</text>
</comment>
<comment type="mass spectrometry" mass="6156.0" error="0.8" method="Electrospray" evidence="3">
    <molecule>Proline-rich peptide SP-A</molecule>
    <text>Proline-rich peptide SP-A.</text>
</comment>
<comment type="mass spectrometry" mass="1904.0" error="0.4" method="Electrospray" evidence="3">
    <molecule>Proline-rich peptide SP-B</molecule>
    <text>Proline-rich peptide SP-B.</text>
</comment>
<keyword id="KW-0025">Alternative splicing</keyword>
<keyword id="KW-0903">Direct protein sequencing</keyword>
<keyword id="KW-0372">Hormone</keyword>
<keyword id="KW-0597">Phosphoprotein</keyword>
<keyword id="KW-1185">Reference proteome</keyword>
<keyword id="KW-0677">Repeat</keyword>
<keyword id="KW-0964">Secreted</keyword>
<keyword id="KW-0732">Signal</keyword>
<dbReference type="EMBL" id="AY035847">
    <property type="protein sequence ID" value="AAK61381.1"/>
    <property type="molecule type" value="mRNA"/>
</dbReference>
<dbReference type="EMBL" id="AY035848">
    <property type="protein sequence ID" value="AAK61382.1"/>
    <property type="molecule type" value="mRNA"/>
</dbReference>
<dbReference type="EMBL" id="AY035849">
    <property type="protein sequence ID" value="AAK61383.1"/>
    <property type="molecule type" value="mRNA"/>
</dbReference>
<dbReference type="RefSeq" id="NP_001092050.1">
    <property type="nucleotide sequence ID" value="NM_001098580.1"/>
</dbReference>
<dbReference type="RefSeq" id="NP_001094495.1">
    <property type="nucleotide sequence ID" value="NM_001101025.1"/>
</dbReference>
<dbReference type="iPTMnet" id="Q95JC9"/>
<dbReference type="PaxDb" id="9823-ENSSSCP00000000661"/>
<dbReference type="PeptideAtlas" id="Q95JC9"/>
<dbReference type="GeneID" id="100049648"/>
<dbReference type="GeneID" id="100113399"/>
<dbReference type="KEGG" id="ssc:100049648"/>
<dbReference type="KEGG" id="ssc:100113399"/>
<dbReference type="CTD" id="100049648"/>
<dbReference type="CTD" id="100113399"/>
<dbReference type="InParanoid" id="Q95JC9"/>
<dbReference type="Proteomes" id="UP000008227">
    <property type="component" value="Unplaced"/>
</dbReference>
<dbReference type="Proteomes" id="UP000314985">
    <property type="component" value="Unplaced"/>
</dbReference>
<dbReference type="Proteomes" id="UP000694570">
    <property type="component" value="Unplaced"/>
</dbReference>
<dbReference type="Proteomes" id="UP000694571">
    <property type="component" value="Unplaced"/>
</dbReference>
<dbReference type="Proteomes" id="UP000694720">
    <property type="component" value="Unplaced"/>
</dbReference>
<dbReference type="Proteomes" id="UP000694722">
    <property type="component" value="Unplaced"/>
</dbReference>
<dbReference type="Proteomes" id="UP000694723">
    <property type="component" value="Unplaced"/>
</dbReference>
<dbReference type="Proteomes" id="UP000694724">
    <property type="component" value="Unplaced"/>
</dbReference>
<dbReference type="Proteomes" id="UP000694725">
    <property type="component" value="Unplaced"/>
</dbReference>
<dbReference type="Proteomes" id="UP000694726">
    <property type="component" value="Unplaced"/>
</dbReference>
<dbReference type="Proteomes" id="UP000694727">
    <property type="component" value="Unplaced"/>
</dbReference>
<dbReference type="Proteomes" id="UP000694728">
    <property type="component" value="Unplaced"/>
</dbReference>
<dbReference type="GO" id="GO:0005576">
    <property type="term" value="C:extracellular region"/>
    <property type="evidence" value="ECO:0007669"/>
    <property type="project" value="UniProtKB-SubCell"/>
</dbReference>
<dbReference type="GO" id="GO:0005179">
    <property type="term" value="F:hormone activity"/>
    <property type="evidence" value="ECO:0007669"/>
    <property type="project" value="UniProtKB-KW"/>
</dbReference>
<dbReference type="PRINTS" id="PR01217">
    <property type="entry name" value="PRICHEXTENSN"/>
</dbReference>
<organism>
    <name type="scientific">Sus scrofa</name>
    <name type="common">Pig</name>
    <dbReference type="NCBI Taxonomy" id="9823"/>
    <lineage>
        <taxon>Eukaryota</taxon>
        <taxon>Metazoa</taxon>
        <taxon>Chordata</taxon>
        <taxon>Craniata</taxon>
        <taxon>Vertebrata</taxon>
        <taxon>Euteleostomi</taxon>
        <taxon>Mammalia</taxon>
        <taxon>Eutheria</taxon>
        <taxon>Laurasiatheria</taxon>
        <taxon>Artiodactyla</taxon>
        <taxon>Suina</taxon>
        <taxon>Suidae</taxon>
        <taxon>Sus</taxon>
    </lineage>
</organism>
<sequence length="676" mass="62283">MLPILLSVALLALSSARSPFFDLEDANSNSAEKFLRPPPGGGPPRPPPPEESQGEGHQKRPRPPGDGPEQGPAPPGARPPPGPPPPGPPPPGPAPPGARPPPGPPPPGPPPPGPAPPGARPPPGPPPPGPPPPGPAPPGARPPPGPPPPGPPPPGPAPPGARPPPGPPPPGPPPPGPAPPGARPPPGPPPPGPPPPGPAPPGARPPPGPPPPGPPPPGPAPPGARPPPGPPPPGPPPPGPAPPGARPPPGPPPLGPPPPGPAPPGARPPPGPPPPGPPPPGPAPPGARPPPGPPPPGPPPPGPAPPGARPPPGPPPPGPPPPGPAPPGARPPPGPPPPGPPPPGPAPPGARPPPGPPPPGPPPPGPAPPGARPPPGPPPPGPPPPGPAPPGARPPPGPPPPGPPPPGPAPPGARPPPPPPPPADEPQQGPAPSGDKPKKKPPPPAGPPPPGPPSPGPAPPGARPPPGPPPPGPPPPGPAPPGARPPPGPPPPGPPPPGPAPPGARPPPGPPPPGPPPPGPAPPGARPPPGPPPPGPPPPGPAPPGARPPPGPPPPGPPPPGPAPPGARPPPGPPPPGPPPPGPAPPGARPPPGPPPPGPPPPGPAPPGARPPPGPPPPGPPPPGPAPPGARPPPGPPPPGPPPPGPAPPGARPPPGPPPPPPGPSPPRPPPGPPPQ</sequence>
<evidence type="ECO:0000256" key="1">
    <source>
        <dbReference type="SAM" id="MobiDB-lite"/>
    </source>
</evidence>
<evidence type="ECO:0000269" key="2">
    <source>
    </source>
</evidence>
<evidence type="ECO:0000269" key="3">
    <source>
    </source>
</evidence>
<evidence type="ECO:0000269" key="4">
    <source>
    </source>
</evidence>
<evidence type="ECO:0000303" key="5">
    <source>
    </source>
</evidence>
<evidence type="ECO:0000305" key="6"/>
<evidence type="ECO:0000312" key="7">
    <source>
        <dbReference type="EMBL" id="AAK61383.1"/>
    </source>
</evidence>
<feature type="signal peptide" evidence="3">
    <location>
        <begin position="1"/>
        <end position="16"/>
    </location>
</feature>
<feature type="peptide" id="PRO_0000235856" description="Proline-rich peptide SP-A">
    <location>
        <begin position="17"/>
        <end position="72"/>
    </location>
</feature>
<feature type="peptide" id="PRO_0000235857" description="Proline-rich peptide SP-B">
    <location>
        <begin position="73"/>
        <end position="93"/>
    </location>
</feature>
<feature type="peptide" id="PRO_0000235858" description="Proline-rich peptide SP-B">
    <location>
        <begin position="94"/>
        <end position="114"/>
    </location>
</feature>
<feature type="peptide" id="PRO_0000235859" description="Proline-rich peptide SP-B">
    <location>
        <begin position="115"/>
        <end position="135"/>
    </location>
</feature>
<feature type="peptide" id="PRO_0000235860" description="Proline-rich peptide SP-B">
    <location>
        <begin position="136"/>
        <end position="156"/>
    </location>
</feature>
<feature type="peptide" id="PRO_0000235861" description="Proline-rich peptide SP-B">
    <location>
        <begin position="157"/>
        <end position="177"/>
    </location>
</feature>
<feature type="peptide" id="PRO_0000235862" description="Proline-rich peptide SP-B">
    <location>
        <begin position="178"/>
        <end position="198"/>
    </location>
</feature>
<feature type="peptide" id="PRO_0000235863" description="Proline-rich peptide SP-B">
    <location>
        <begin position="199"/>
        <end position="219"/>
    </location>
</feature>
<feature type="peptide" id="PRO_0000235864" description="Proline-rich peptide SP-B">
    <location>
        <begin position="220"/>
        <end position="240"/>
    </location>
</feature>
<feature type="peptide" id="PRO_0000235865" description="Proline-rich peptide SP-B-like">
    <location>
        <begin position="241"/>
        <end position="261"/>
    </location>
</feature>
<feature type="peptide" id="PRO_0000235866" description="Proline-rich peptide SP-B">
    <location>
        <begin position="262"/>
        <end position="282"/>
    </location>
</feature>
<feature type="peptide" id="PRO_0000235867" description="Proline-rich peptide SP-B">
    <location>
        <begin position="283"/>
        <end position="303"/>
    </location>
</feature>
<feature type="peptide" id="PRO_0000235868" description="Proline-rich peptide SP-B">
    <location>
        <begin position="304"/>
        <end position="324"/>
    </location>
</feature>
<feature type="peptide" id="PRO_0000235869" description="Proline-rich peptide SP-B">
    <location>
        <begin position="325"/>
        <end position="345"/>
    </location>
</feature>
<feature type="peptide" id="PRO_0000235870" description="Proline-rich peptide SP-B">
    <location>
        <begin position="346"/>
        <end position="366"/>
    </location>
</feature>
<feature type="peptide" id="PRO_0000235871" description="Proline-rich peptide SP-B">
    <location>
        <begin position="367"/>
        <end position="387"/>
    </location>
</feature>
<feature type="peptide" id="PRO_0000235872" description="Proline-rich peptide SP-B">
    <location>
        <begin position="388"/>
        <end position="408"/>
    </location>
</feature>
<feature type="propeptide" id="PRO_0000235873" evidence="3">
    <location>
        <begin position="409"/>
        <end position="457"/>
    </location>
</feature>
<feature type="peptide" id="PRO_0000235874" description="Proline-rich peptide SP-B">
    <location>
        <begin position="458"/>
        <end position="478"/>
    </location>
</feature>
<feature type="peptide" id="PRO_0000235875" description="Proline-rich peptide SP-B">
    <location>
        <begin position="479"/>
        <end position="499"/>
    </location>
</feature>
<feature type="peptide" id="PRO_0000235876" description="Proline-rich peptide SP-B">
    <location>
        <begin position="500"/>
        <end position="520"/>
    </location>
</feature>
<feature type="peptide" id="PRO_0000235877" description="Proline-rich peptide SP-B">
    <location>
        <begin position="521"/>
        <end position="541"/>
    </location>
</feature>
<feature type="peptide" id="PRO_0000235878" description="Proline-rich peptide SP-B">
    <location>
        <begin position="542"/>
        <end position="562"/>
    </location>
</feature>
<feature type="peptide" id="PRO_0000235879" description="Proline-rich peptide SP-B">
    <location>
        <begin position="563"/>
        <end position="583"/>
    </location>
</feature>
<feature type="peptide" id="PRO_0000235880" description="Proline-rich peptide SP-B">
    <location>
        <begin position="584"/>
        <end position="604"/>
    </location>
</feature>
<feature type="peptide" id="PRO_0000235881" description="Proline-rich peptide SP-B">
    <location>
        <begin position="605"/>
        <end position="625"/>
    </location>
</feature>
<feature type="peptide" id="PRO_0000235882" description="Proline-rich peptide SP-B">
    <location>
        <begin position="626"/>
        <end position="646"/>
    </location>
</feature>
<feature type="peptide" id="PRO_0000235883" description="Parotid hormone" evidence="2 4">
    <location>
        <begin position="647"/>
        <end position="676"/>
    </location>
</feature>
<feature type="region of interest" description="Disordered" evidence="1">
    <location>
        <begin position="29"/>
        <end position="676"/>
    </location>
</feature>
<feature type="compositionally biased region" description="Pro residues" evidence="1">
    <location>
        <begin position="36"/>
        <end position="50"/>
    </location>
</feature>
<feature type="compositionally biased region" description="Pro residues" evidence="1">
    <location>
        <begin position="71"/>
        <end position="424"/>
    </location>
</feature>
<feature type="compositionally biased region" description="Pro residues" evidence="1">
    <location>
        <begin position="442"/>
        <end position="676"/>
    </location>
</feature>
<feature type="modified residue" description="Phosphoserine" evidence="3">
    <location>
        <position position="28"/>
    </location>
</feature>
<feature type="modified residue" description="Phosphoserine" evidence="3">
    <location>
        <position position="30"/>
    </location>
</feature>
<feature type="splice variant" id="VSP_052037" description="In isoform 2 and isoform 3." evidence="5">
    <original>GPPPPGPAPPGARPPPGPPPPGPPPPGPAPPGARPPPGPPPPGPPPPGPAPPGARPPPGPPPPGPPPPGPAPPGARPPPGPPPPGPPPPGPAPPGARPPPGPPPLGPPPPGPAPPGARPPPGPPPPGPPPPGPAPPGARPPPG</original>
    <variation>AGGLQQGPAPSHVGPKKKPPPPGAGHPPRPPPPANESQPGPRPPPGPPSPPANDSQEGSPPSADGPQQGPAPSGDKPKKKPPPPAGPPPPP</variation>
    <location>
        <begin position="150"/>
        <end position="292"/>
    </location>
</feature>
<feature type="splice variant" id="VSP_052038" description="In isoform 2 and isoform 3." evidence="5">
    <location>
        <begin position="418"/>
        <end position="466"/>
    </location>
</feature>
<feature type="splice variant" id="VSP_052040" description="In isoform 2." evidence="5">
    <original>GPPPPGPAPPGARPPPGPPPPGPPPPGPAPPGARPPPGPPPPGPPPPGPAPPGARPP</original>
    <variation>ADEPQQGPAPSGDKPKKKPPPPAGPPPPPPPPPGIQGQKMSAKTPVLRRAVTLECDG</variation>
    <location>
        <begin position="556"/>
        <end position="612"/>
    </location>
</feature>
<feature type="splice variant" id="VSP_052039" description="In isoform 3." evidence="5">
    <original>GPPPPGPAPPGARPPPGPPPPGPPPPGPAPPGARPPPG</original>
    <variation>ADEPQQGPAPSGDKPKKKPPPPAGPPPPP</variation>
    <location>
        <begin position="556"/>
        <end position="593"/>
    </location>
</feature>
<feature type="splice variant" id="VSP_052041" description="In isoform 2." evidence="5">
    <location>
        <begin position="613"/>
        <end position="676"/>
    </location>
</feature>
<feature type="sequence conflict" description="In Ref. 1; AAK61383." evidence="6" ref="1">
    <original>S</original>
    <variation>A</variation>
    <location>
        <position position="30"/>
    </location>
</feature>
<feature type="sequence conflict" description="In Ref. 1; AAK61383." evidence="6" ref="1">
    <original>R</original>
    <variation>E</variation>
    <location>
        <position position="78"/>
    </location>
</feature>
<feature type="sequence conflict" description="In Ref. 1; AAK61383." evidence="6" ref="1">
    <original>G</original>
    <variation>D</variation>
    <location>
        <position position="118"/>
    </location>
</feature>
<feature type="sequence conflict" description="In Ref. 1; AAK61381/AAK61382." evidence="6" ref="1">
    <original>P</original>
    <variation>H</variation>
    <location>
        <position position="348"/>
    </location>
</feature>
<feature type="sequence conflict" description="In Ref. 1; AAK61381/AAK61382." evidence="6" ref="1">
    <original>P</original>
    <variation>L</variation>
    <location>
        <position position="528"/>
    </location>
</feature>
<feature type="sequence conflict" description="In Ref. 1; AAK61381/AAK61382." evidence="6" ref="1">
    <original>G</original>
    <variation>P</variation>
    <location>
        <position position="551"/>
    </location>
</feature>
<reference evidence="6 7" key="1">
    <citation type="journal article" date="2005" name="J. Biol. Chem.">
        <title>Cloning and functional study of porcine parotid hormone, a novel proline-rich protein.</title>
        <authorList>
            <person name="Zhang Q."/>
            <person name="Szalay A.A."/>
            <person name="Tieche J.-M."/>
            <person name="Kyeyune-Nyombi E."/>
            <person name="Sands J.F."/>
            <person name="Oberg K.C."/>
            <person name="Leonora J."/>
        </authorList>
    </citation>
    <scope>NUCLEOTIDE SEQUENCE [MRNA] (ISOFORMS 1; 2 AND 3)</scope>
    <scope>PROTEIN SEQUENCE OF 647-676 (ISOFORMS 1/3)</scope>
    <scope>TISSUE SPECIFICITY</scope>
    <source>
        <strain evidence="7">Yorkshire</strain>
        <tissue evidence="7">Parotid gland</tissue>
    </source>
</reference>
<reference evidence="6" key="2">
    <citation type="journal article" date="2005" name="Peptides">
        <title>Two proline-rich peptides from pig (Sus scrofa) salivary glands generated by pre-secretory pathway underlying the action of a proteinase cleaving Pro-Ala bonds.</title>
        <authorList>
            <person name="Patamia M."/>
            <person name="Messana I."/>
            <person name="Petruzzelli R."/>
            <person name="Vitali A."/>
            <person name="Inzitari R."/>
            <person name="Cabras T."/>
            <person name="Fanali C."/>
            <person name="Scarano E."/>
            <person name="Contucci A."/>
            <person name="Galtieri A."/>
            <person name="Castagnola M."/>
        </authorList>
    </citation>
    <scope>PARTIAL PROTEIN SEQUENCE (ISOFORMS 1/2/3)</scope>
    <scope>SUBCELLULAR LOCATION</scope>
    <scope>TISSUE SPECIFICITY</scope>
    <scope>MASS SPECTROMETRY</scope>
    <scope>PHOSPHORYLATION AT SER-28 AND SER-30</scope>
    <source>
        <strain evidence="3">Landrace</strain>
        <tissue evidence="3">Saliva</tissue>
    </source>
</reference>
<reference evidence="6" key="3">
    <citation type="journal article" date="1980" name="Endocrinology">
        <title>Isolation and partial characterization of a porcine parotid hormone that stimulates dentinal fluid transport.</title>
        <authorList>
            <person name="Tieche J.-M."/>
            <person name="Leonora J."/>
            <person name="Steinman R.R."/>
        </authorList>
    </citation>
    <scope>PROTEIN SEQUENCE OF 647-672 (ISOFORMS 1/3)</scope>
    <scope>FUNCTION</scope>
    <source>
        <tissue evidence="4">Parotid gland</tissue>
    </source>
</reference>
<name>PRP_PIG</name>